<dbReference type="EC" id="5.6.2.4" evidence="1"/>
<dbReference type="EMBL" id="AY095296">
    <property type="protein sequence ID" value="AAM26298.1"/>
    <property type="molecule type" value="mRNA"/>
</dbReference>
<dbReference type="EMBL" id="BX284604">
    <property type="protein sequence ID" value="CAB05609.2"/>
    <property type="molecule type" value="Genomic_DNA"/>
</dbReference>
<dbReference type="PIR" id="T24415">
    <property type="entry name" value="T24415"/>
</dbReference>
<dbReference type="RefSeq" id="NP_502390.2">
    <property type="nucleotide sequence ID" value="NM_069989.5"/>
</dbReference>
<dbReference type="SMR" id="O18017"/>
<dbReference type="BioGRID" id="43294">
    <property type="interactions" value="9"/>
</dbReference>
<dbReference type="ComplexPortal" id="CPX-7361">
    <property type="entry name" value="BTR double Holliday Junction dissolution complex"/>
</dbReference>
<dbReference type="FunCoup" id="O18017">
    <property type="interactions" value="330"/>
</dbReference>
<dbReference type="IntAct" id="O18017">
    <property type="interactions" value="4"/>
</dbReference>
<dbReference type="MINT" id="O18017"/>
<dbReference type="STRING" id="6239.T04A11.6.1"/>
<dbReference type="PaxDb" id="6239-T04A11.6"/>
<dbReference type="EnsemblMetazoa" id="T04A11.6.1">
    <property type="protein sequence ID" value="T04A11.6.1"/>
    <property type="gene ID" value="WBGene00001865"/>
</dbReference>
<dbReference type="GeneID" id="178201"/>
<dbReference type="KEGG" id="cel:CELE_T04A11.6"/>
<dbReference type="UCSC" id="T04A11.6.1">
    <property type="organism name" value="c. elegans"/>
</dbReference>
<dbReference type="AGR" id="WB:WBGene00001865"/>
<dbReference type="CTD" id="178201"/>
<dbReference type="WormBase" id="T04A11.6">
    <property type="protein sequence ID" value="CE31724"/>
    <property type="gene ID" value="WBGene00001865"/>
    <property type="gene designation" value="him-6"/>
</dbReference>
<dbReference type="eggNOG" id="KOG0351">
    <property type="taxonomic scope" value="Eukaryota"/>
</dbReference>
<dbReference type="GeneTree" id="ENSGT00940000156800"/>
<dbReference type="HOGENOM" id="CLU_001103_3_0_1"/>
<dbReference type="InParanoid" id="O18017"/>
<dbReference type="OMA" id="LEIVAYC"/>
<dbReference type="OrthoDB" id="10261556at2759"/>
<dbReference type="PhylomeDB" id="O18017"/>
<dbReference type="Reactome" id="R-CEL-5693607">
    <property type="pathway name" value="Processing of DNA double-strand break ends"/>
</dbReference>
<dbReference type="SignaLink" id="O18017"/>
<dbReference type="PRO" id="PR:O18017"/>
<dbReference type="Proteomes" id="UP000001940">
    <property type="component" value="Chromosome IV"/>
</dbReference>
<dbReference type="Bgee" id="WBGene00001865">
    <property type="expression patterns" value="Expressed in germ line (C elegans) and 4 other cell types or tissues"/>
</dbReference>
<dbReference type="GO" id="GO:0005694">
    <property type="term" value="C:chromosome"/>
    <property type="evidence" value="ECO:0000314"/>
    <property type="project" value="UniProtKB"/>
</dbReference>
<dbReference type="GO" id="GO:0005737">
    <property type="term" value="C:cytoplasm"/>
    <property type="evidence" value="ECO:0000318"/>
    <property type="project" value="GO_Central"/>
</dbReference>
<dbReference type="GO" id="GO:0005634">
    <property type="term" value="C:nucleus"/>
    <property type="evidence" value="ECO:0000314"/>
    <property type="project" value="UniProtKB"/>
</dbReference>
<dbReference type="GO" id="GO:0043138">
    <property type="term" value="F:3'-5' DNA helicase activity"/>
    <property type="evidence" value="ECO:0000314"/>
    <property type="project" value="WormBase"/>
</dbReference>
<dbReference type="GO" id="GO:0005524">
    <property type="term" value="F:ATP binding"/>
    <property type="evidence" value="ECO:0007669"/>
    <property type="project" value="UniProtKB-KW"/>
</dbReference>
<dbReference type="GO" id="GO:0016887">
    <property type="term" value="F:ATP hydrolysis activity"/>
    <property type="evidence" value="ECO:0007669"/>
    <property type="project" value="RHEA"/>
</dbReference>
<dbReference type="GO" id="GO:0008094">
    <property type="term" value="F:ATP-dependent activity, acting on DNA"/>
    <property type="evidence" value="ECO:0000314"/>
    <property type="project" value="WormBase"/>
</dbReference>
<dbReference type="GO" id="GO:0003677">
    <property type="term" value="F:DNA binding"/>
    <property type="evidence" value="ECO:0007669"/>
    <property type="project" value="UniProtKB-KW"/>
</dbReference>
<dbReference type="GO" id="GO:0019899">
    <property type="term" value="F:enzyme binding"/>
    <property type="evidence" value="ECO:0000353"/>
    <property type="project" value="WormBase"/>
</dbReference>
<dbReference type="GO" id="GO:0009378">
    <property type="term" value="F:four-way junction helicase activity"/>
    <property type="evidence" value="ECO:0000318"/>
    <property type="project" value="GO_Central"/>
</dbReference>
<dbReference type="GO" id="GO:0046872">
    <property type="term" value="F:metal ion binding"/>
    <property type="evidence" value="ECO:0007669"/>
    <property type="project" value="UniProtKB-KW"/>
</dbReference>
<dbReference type="GO" id="GO:0051276">
    <property type="term" value="P:chromosome organization"/>
    <property type="evidence" value="ECO:0000316"/>
    <property type="project" value="WormBase"/>
</dbReference>
<dbReference type="GO" id="GO:0007059">
    <property type="term" value="P:chromosome segregation"/>
    <property type="evidence" value="ECO:0000316"/>
    <property type="project" value="WormBase"/>
</dbReference>
<dbReference type="GO" id="GO:0008340">
    <property type="term" value="P:determination of adult lifespan"/>
    <property type="evidence" value="ECO:0000315"/>
    <property type="project" value="WormBase"/>
</dbReference>
<dbReference type="GO" id="GO:0000077">
    <property type="term" value="P:DNA damage checkpoint signaling"/>
    <property type="evidence" value="ECO:0000315"/>
    <property type="project" value="WormBase"/>
</dbReference>
<dbReference type="GO" id="GO:0006260">
    <property type="term" value="P:DNA replication"/>
    <property type="evidence" value="ECO:0000318"/>
    <property type="project" value="GO_Central"/>
</dbReference>
<dbReference type="GO" id="GO:0000724">
    <property type="term" value="P:double-strand break repair via homologous recombination"/>
    <property type="evidence" value="ECO:0000318"/>
    <property type="project" value="GO_Central"/>
</dbReference>
<dbReference type="GO" id="GO:0051321">
    <property type="term" value="P:meiotic cell cycle"/>
    <property type="evidence" value="ECO:0000316"/>
    <property type="project" value="WormBase"/>
</dbReference>
<dbReference type="GO" id="GO:0051307">
    <property type="term" value="P:meiotic chromosome separation"/>
    <property type="evidence" value="ECO:0000315"/>
    <property type="project" value="WormBase"/>
</dbReference>
<dbReference type="GO" id="GO:0010705">
    <property type="term" value="P:meiotic DNA double-strand break processing involved in reciprocal meiotic recombination"/>
    <property type="evidence" value="ECO:0000316"/>
    <property type="project" value="WormBase"/>
</dbReference>
<dbReference type="GO" id="GO:0000278">
    <property type="term" value="P:mitotic cell cycle"/>
    <property type="evidence" value="ECO:0000316"/>
    <property type="project" value="WormBase"/>
</dbReference>
<dbReference type="GO" id="GO:0043066">
    <property type="term" value="P:negative regulation of apoptotic process"/>
    <property type="evidence" value="ECO:0000315"/>
    <property type="project" value="WormBase"/>
</dbReference>
<dbReference type="GO" id="GO:0007131">
    <property type="term" value="P:reciprocal meiotic recombination"/>
    <property type="evidence" value="ECO:0000315"/>
    <property type="project" value="WormBase"/>
</dbReference>
<dbReference type="GO" id="GO:0071139">
    <property type="term" value="P:resolution of DNA recombination intermediates"/>
    <property type="evidence" value="ECO:0000315"/>
    <property type="project" value="WormBase"/>
</dbReference>
<dbReference type="GO" id="GO:0000712">
    <property type="term" value="P:resolution of meiotic recombination intermediates"/>
    <property type="evidence" value="ECO:0000316"/>
    <property type="project" value="WormBase"/>
</dbReference>
<dbReference type="GO" id="GO:0010165">
    <property type="term" value="P:response to X-ray"/>
    <property type="evidence" value="ECO:0000315"/>
    <property type="project" value="WormBase"/>
</dbReference>
<dbReference type="CDD" id="cd18016">
    <property type="entry name" value="DEXHc_RecQ2_BLM"/>
    <property type="match status" value="1"/>
</dbReference>
<dbReference type="CDD" id="cd18794">
    <property type="entry name" value="SF2_C_RecQ"/>
    <property type="match status" value="1"/>
</dbReference>
<dbReference type="FunFam" id="1.10.10.10:FF:000878">
    <property type="entry name" value="ATP-dependent DNA helicase"/>
    <property type="match status" value="1"/>
</dbReference>
<dbReference type="FunFam" id="1.10.150.80:FF:000019">
    <property type="entry name" value="ATP-dependent DNA helicase"/>
    <property type="match status" value="1"/>
</dbReference>
<dbReference type="FunFam" id="3.40.50.300:FF:000296">
    <property type="entry name" value="ATP-dependent DNA helicase RecQ"/>
    <property type="match status" value="1"/>
</dbReference>
<dbReference type="FunFam" id="3.40.50.300:FF:000340">
    <property type="entry name" value="Bloom syndrome, RecQ helicase"/>
    <property type="match status" value="1"/>
</dbReference>
<dbReference type="Gene3D" id="1.10.150.80">
    <property type="entry name" value="HRDC domain"/>
    <property type="match status" value="1"/>
</dbReference>
<dbReference type="Gene3D" id="3.40.50.300">
    <property type="entry name" value="P-loop containing nucleotide triphosphate hydrolases"/>
    <property type="match status" value="2"/>
</dbReference>
<dbReference type="Gene3D" id="1.10.10.10">
    <property type="entry name" value="Winged helix-like DNA-binding domain superfamily/Winged helix DNA-binding domain"/>
    <property type="match status" value="1"/>
</dbReference>
<dbReference type="InterPro" id="IPR011545">
    <property type="entry name" value="DEAD/DEAH_box_helicase_dom"/>
</dbReference>
<dbReference type="InterPro" id="IPR002464">
    <property type="entry name" value="DNA/RNA_helicase_DEAH_CS"/>
</dbReference>
<dbReference type="InterPro" id="IPR004589">
    <property type="entry name" value="DNA_helicase_ATP-dep_RecQ"/>
</dbReference>
<dbReference type="InterPro" id="IPR014001">
    <property type="entry name" value="Helicase_ATP-bd"/>
</dbReference>
<dbReference type="InterPro" id="IPR001650">
    <property type="entry name" value="Helicase_C-like"/>
</dbReference>
<dbReference type="InterPro" id="IPR010997">
    <property type="entry name" value="HRDC-like_sf"/>
</dbReference>
<dbReference type="InterPro" id="IPR002121">
    <property type="entry name" value="HRDC_dom"/>
</dbReference>
<dbReference type="InterPro" id="IPR044876">
    <property type="entry name" value="HRDC_dom_sf"/>
</dbReference>
<dbReference type="InterPro" id="IPR027417">
    <property type="entry name" value="P-loop_NTPase"/>
</dbReference>
<dbReference type="InterPro" id="IPR032284">
    <property type="entry name" value="RecQ_Zn-bd"/>
</dbReference>
<dbReference type="InterPro" id="IPR018982">
    <property type="entry name" value="RQC_domain"/>
</dbReference>
<dbReference type="InterPro" id="IPR036388">
    <property type="entry name" value="WH-like_DNA-bd_sf"/>
</dbReference>
<dbReference type="InterPro" id="IPR036390">
    <property type="entry name" value="WH_DNA-bd_sf"/>
</dbReference>
<dbReference type="NCBIfam" id="TIGR00614">
    <property type="entry name" value="recQ_fam"/>
    <property type="match status" value="1"/>
</dbReference>
<dbReference type="PANTHER" id="PTHR13710">
    <property type="entry name" value="DNA HELICASE RECQ FAMILY MEMBER"/>
    <property type="match status" value="1"/>
</dbReference>
<dbReference type="PANTHER" id="PTHR13710:SF153">
    <property type="entry name" value="RECQ-LIKE DNA HELICASE BLM"/>
    <property type="match status" value="1"/>
</dbReference>
<dbReference type="Pfam" id="PF00270">
    <property type="entry name" value="DEAD"/>
    <property type="match status" value="1"/>
</dbReference>
<dbReference type="Pfam" id="PF00271">
    <property type="entry name" value="Helicase_C"/>
    <property type="match status" value="1"/>
</dbReference>
<dbReference type="Pfam" id="PF00570">
    <property type="entry name" value="HRDC"/>
    <property type="match status" value="1"/>
</dbReference>
<dbReference type="Pfam" id="PF16124">
    <property type="entry name" value="RecQ_Zn_bind"/>
    <property type="match status" value="1"/>
</dbReference>
<dbReference type="Pfam" id="PF09382">
    <property type="entry name" value="RQC"/>
    <property type="match status" value="1"/>
</dbReference>
<dbReference type="SMART" id="SM00487">
    <property type="entry name" value="DEXDc"/>
    <property type="match status" value="1"/>
</dbReference>
<dbReference type="SMART" id="SM00490">
    <property type="entry name" value="HELICc"/>
    <property type="match status" value="1"/>
</dbReference>
<dbReference type="SMART" id="SM00341">
    <property type="entry name" value="HRDC"/>
    <property type="match status" value="1"/>
</dbReference>
<dbReference type="SMART" id="SM00956">
    <property type="entry name" value="RQC"/>
    <property type="match status" value="1"/>
</dbReference>
<dbReference type="SUPFAM" id="SSF47819">
    <property type="entry name" value="HRDC-like"/>
    <property type="match status" value="1"/>
</dbReference>
<dbReference type="SUPFAM" id="SSF52540">
    <property type="entry name" value="P-loop containing nucleoside triphosphate hydrolases"/>
    <property type="match status" value="1"/>
</dbReference>
<dbReference type="SUPFAM" id="SSF46785">
    <property type="entry name" value="Winged helix' DNA-binding domain"/>
    <property type="match status" value="1"/>
</dbReference>
<dbReference type="PROSITE" id="PS00690">
    <property type="entry name" value="DEAH_ATP_HELICASE"/>
    <property type="match status" value="1"/>
</dbReference>
<dbReference type="PROSITE" id="PS51192">
    <property type="entry name" value="HELICASE_ATP_BIND_1"/>
    <property type="match status" value="1"/>
</dbReference>
<dbReference type="PROSITE" id="PS51194">
    <property type="entry name" value="HELICASE_CTER"/>
    <property type="match status" value="1"/>
</dbReference>
<dbReference type="PROSITE" id="PS50967">
    <property type="entry name" value="HRDC"/>
    <property type="match status" value="1"/>
</dbReference>
<name>BLM_CAEEL</name>
<evidence type="ECO:0000250" key="1">
    <source>
        <dbReference type="UniProtKB" id="P54132"/>
    </source>
</evidence>
<evidence type="ECO:0000250" key="2">
    <source>
        <dbReference type="UniProtKB" id="Q9DEY9"/>
    </source>
</evidence>
<evidence type="ECO:0000250" key="3">
    <source>
        <dbReference type="UniProtKB" id="Q9QY16"/>
    </source>
</evidence>
<evidence type="ECO:0000255" key="4">
    <source>
        <dbReference type="PROSITE-ProRule" id="PRU00328"/>
    </source>
</evidence>
<evidence type="ECO:0000255" key="5">
    <source>
        <dbReference type="PROSITE-ProRule" id="PRU00541"/>
    </source>
</evidence>
<evidence type="ECO:0000255" key="6">
    <source>
        <dbReference type="PROSITE-ProRule" id="PRU00542"/>
    </source>
</evidence>
<evidence type="ECO:0000256" key="7">
    <source>
        <dbReference type="SAM" id="MobiDB-lite"/>
    </source>
</evidence>
<evidence type="ECO:0000269" key="8">
    <source>
    </source>
</evidence>
<evidence type="ECO:0000269" key="9">
    <source>
    </source>
</evidence>
<evidence type="ECO:0000269" key="10">
    <source>
    </source>
</evidence>
<evidence type="ECO:0000269" key="11">
    <source>
    </source>
</evidence>
<evidence type="ECO:0000269" key="12">
    <source>
    </source>
</evidence>
<evidence type="ECO:0000305" key="13"/>
<evidence type="ECO:0000305" key="14">
    <source>
    </source>
</evidence>
<evidence type="ECO:0000312" key="15">
    <source>
        <dbReference type="WormBase" id="T04A11.6"/>
    </source>
</evidence>
<proteinExistence type="evidence at protein level"/>
<sequence>MIKNREIEVAPPRRTIQFGGYTFVEPDLNFKAPIFSCCGSIRDPSCEEREEEYIDNGHDEEPPVEVNRIQESTSFDEPVSSPPRYRPSENPGPSSSSYEPGHYSFNEYQQFPSRPQKRLVDPPIVDLDEEPPIVDLDDSFDNFHVGSTSEEVVSGDIAPEEEEEEGHDSFDDFESVPAQPPSKNTLASLQKSDSEIALNQQRHDMHGRFRGFLQDDSEEFSDEVGLLGADMNKELYDTLKSKFGFNQFRHRQKQCILSTLMGHDTFVLMPTGAGKSLCYQLPAVILPGVTVVVSPLRSLIEDQKMKMKELGIGCEALTADLGAPAQEKIYAELGSGNPSIKLLYVTPEKISASGRLNSVFFDLHRRGLLARFVIDEAHCVSQWGHDFRPDYTKLSSLREKYANPPVPIIALTATATPKIVTDARDHLKMQNSKLFISSFVRDNLKYDLIPKAARSLINVVEKMKQLYPGKSGIVYCLSRKECETVQMMLTKAGLSAEVYHAGLNDNLRVSVQRSWIANKFDVICATIAFGMGIDKPDVRFVIHYSLPKSIEGYYQETGRAGRDGMPSYCLMLYSYHDSIRLRRMIEEGNTTTGVRSMHLNNVLQVVAYCENVSVCRRKMLVEHFGEVYDEQSCRNSKTPCDICERQRKNAEAIRLFDVSTDALSILKCLPRMQKATLKYISELYRGALIKKSQEQAMRLGHTKLPFYSKGQGMSEQDALRFVRKLVIEGYIHERLYSVPNQAAAVFAYAELTEAGRDLANGKKTAKVYLHIVTCERKRKNAGLIELSNMNIVSEAQALKERHMVKHGDVFTRCLQDLTHLITAVAESSGLSGPYSIVSREGIEQIAALLPRTNSDLLRIDSMTQIKVTKYGRLIMELLATYWKQVDEREEEEMRNQLDKLKSGEIVMGGFATLQSDPGFPSVPYMKPLGGGGGCRGRGKKRAFSGFSSGRATKKPRATAPSARGKTSGRGGAKPATSLKRNMYPATSM</sequence>
<accession>O18017</accession>
<accession>Q8MZK2</accession>
<protein>
    <recommendedName>
        <fullName evidence="13">RecQ-like DNA helicase blm-1</fullName>
        <ecNumber evidence="1">5.6.2.4</ecNumber>
    </recommendedName>
    <alternativeName>
        <fullName>Bloom syndrome protein homolog</fullName>
    </alternativeName>
    <alternativeName>
        <fullName evidence="13">DNA 3'-5' helicase BLM</fullName>
    </alternativeName>
    <alternativeName>
        <fullName>High incidence of males protein 6</fullName>
    </alternativeName>
    <alternativeName>
        <fullName>RecQ helicase homolog</fullName>
    </alternativeName>
</protein>
<organism>
    <name type="scientific">Caenorhabditis elegans</name>
    <dbReference type="NCBI Taxonomy" id="6239"/>
    <lineage>
        <taxon>Eukaryota</taxon>
        <taxon>Metazoa</taxon>
        <taxon>Ecdysozoa</taxon>
        <taxon>Nematoda</taxon>
        <taxon>Chromadorea</taxon>
        <taxon>Rhabditida</taxon>
        <taxon>Rhabditina</taxon>
        <taxon>Rhabditomorpha</taxon>
        <taxon>Rhabditoidea</taxon>
        <taxon>Rhabditidae</taxon>
        <taxon>Peloderinae</taxon>
        <taxon>Caenorhabditis</taxon>
    </lineage>
</organism>
<reference key="1">
    <citation type="submission" date="2002-04" db="EMBL/GenBank/DDBJ databases">
        <title>The C. elegans homolog of the human Bloom syndrome protein is required for normal level of meiotic recombination and for genomic stability.</title>
        <authorList>
            <person name="Wicky C."/>
            <person name="Passannante M."/>
            <person name="Rose A."/>
            <person name="Mueller F."/>
        </authorList>
    </citation>
    <scope>NUCLEOTIDE SEQUENCE [MRNA]</scope>
</reference>
<reference key="2">
    <citation type="journal article" date="1998" name="Science">
        <title>Genome sequence of the nematode C. elegans: a platform for investigating biology.</title>
        <authorList>
            <consortium name="The C. elegans sequencing consortium"/>
        </authorList>
    </citation>
    <scope>NUCLEOTIDE SEQUENCE [LARGE SCALE GENOMIC DNA]</scope>
    <source>
        <strain>Bristol N2</strain>
    </source>
</reference>
<reference key="3">
    <citation type="journal article" date="1999" name="Genetics">
        <title>Evolution of the RECQ family of helicases: a Drosophila homolog, Dmblm, is similar to the human Bloom syndrome gene.</title>
        <authorList>
            <person name="Kusano K."/>
            <person name="Berres M.E."/>
            <person name="Engels W.R."/>
        </authorList>
    </citation>
    <scope>REPEATS</scope>
</reference>
<reference key="4">
    <citation type="journal article" date="2008" name="Mol. Cell. Biol.">
        <title>GTPase-mediated regulation of the unfolded protein response in Caenorhabditis elegans is dependent on the AAA+ ATPase CDC-48.</title>
        <authorList>
            <person name="Caruso M.E."/>
            <person name="Jenna S."/>
            <person name="Bouchecareilh M."/>
            <person name="Baillie D.L."/>
            <person name="Boismenu D."/>
            <person name="Halawani D."/>
            <person name="Latterich M."/>
            <person name="Chevet E."/>
        </authorList>
    </citation>
    <scope>IDENTIFICATION IN A COMPLEX WITH CDC-48.1 AND CRP-1</scope>
    <scope>INTERACTION WITH CDC-48.1</scope>
</reference>
<reference key="5">
    <citation type="journal article" date="2016" name="PLoS Biol.">
        <title>Separable roles for a Caenorhabditis elegans RMI1 homolog in promoting and antagonizing meiotic crossovers ensure faithful chromosome inheritance.</title>
        <authorList>
            <person name="Jagut M."/>
            <person name="Hamminger P."/>
            <person name="Woglar A."/>
            <person name="Millonigg S."/>
            <person name="Paulin L."/>
            <person name="Mikl M."/>
            <person name="Dello Stritto M.R."/>
            <person name="Tang L."/>
            <person name="Habacher C."/>
            <person name="Tam A."/>
            <person name="Gallach M."/>
            <person name="von Haeseler A."/>
            <person name="Villeneuve A.M."/>
            <person name="Jantsch V."/>
        </authorList>
    </citation>
    <scope>FUNCTION</scope>
    <scope>INTERACTION WITH RMH-1</scope>
    <scope>SUBCELLULAR LOCATION</scope>
    <scope>DISRUPTION PHENOTYPE</scope>
</reference>
<reference key="6">
    <citation type="journal article" date="2016" name="PLoS Genet.">
        <title>The SMC-5/6 complex and the HIM-6 (BLM) helicase synergistically promote meiotic recombination intermediate processing and chromosome maturation during Caenorhabditis elegans meiosis.</title>
        <authorList>
            <person name="Hong Y."/>
            <person name="Sonneville R."/>
            <person name="Agostinho A."/>
            <person name="Meier B."/>
            <person name="Wang B."/>
            <person name="Blow J.J."/>
            <person name="Gartner A."/>
        </authorList>
    </citation>
    <scope>FUNCTION</scope>
    <scope>DISRUPTION PHENOTYPE</scope>
</reference>
<reference key="7">
    <citation type="journal article" date="2021" name="PLoS Genet.">
        <title>Caenorhabditis elegans RMI2 functional homolog-2 (RMIF-2) and RMI1 (RMH-1) have both overlapping and distinct meiotic functions within the BTR complex.</title>
        <authorList>
            <person name="Velkova M."/>
            <person name="Silva N."/>
            <person name="Dello Stritto M.R."/>
            <person name="Schleiffer A."/>
            <person name="Barraud P."/>
            <person name="Hartl M."/>
            <person name="Jantsch V."/>
        </authorList>
    </citation>
    <scope>FUNCTION</scope>
    <scope>IDENTIFICATION IN BTR COMPLEX</scope>
    <scope>SUBCELLULAR LOCATION</scope>
</reference>
<feature type="chain" id="PRO_0000205043" description="RecQ-like DNA helicase blm-1">
    <location>
        <begin position="1"/>
        <end position="988"/>
    </location>
</feature>
<feature type="repeat" description="1" evidence="8">
    <location>
        <begin position="121"/>
        <end position="129"/>
    </location>
</feature>
<feature type="repeat" description="2" evidence="8">
    <location>
        <begin position="130"/>
        <end position="138"/>
    </location>
</feature>
<feature type="domain" description="Helicase ATP-binding" evidence="1 5">
    <location>
        <begin position="256"/>
        <end position="433"/>
    </location>
</feature>
<feature type="domain" description="Helicase C-terminal" evidence="1 6">
    <location>
        <begin position="458"/>
        <end position="603"/>
    </location>
</feature>
<feature type="domain" description="HRDC" evidence="1 4">
    <location>
        <begin position="807"/>
        <end position="888"/>
    </location>
</feature>
<feature type="region of interest" description="Disordered" evidence="7">
    <location>
        <begin position="46"/>
        <end position="119"/>
    </location>
</feature>
<feature type="region of interest" description="2 X 9 AA tandem repeats of [DE]-P-P-I-V-D-L-D-[ED]">
    <location>
        <begin position="121"/>
        <end position="138"/>
    </location>
</feature>
<feature type="region of interest" description="Disordered" evidence="7">
    <location>
        <begin position="148"/>
        <end position="185"/>
    </location>
</feature>
<feature type="region of interest" description="3' overhang DNA-binding" evidence="1">
    <location>
        <begin position="478"/>
        <end position="480"/>
    </location>
</feature>
<feature type="region of interest" description="3' overhang DNA-binding" evidence="1">
    <location>
        <begin position="580"/>
        <end position="583"/>
    </location>
</feature>
<feature type="region of interest" description="3' overhang DNA-binding" evidence="1">
    <location>
        <begin position="676"/>
        <end position="678"/>
    </location>
</feature>
<feature type="region of interest" description="3' overhang DNA-binding" evidence="1">
    <location>
        <begin position="687"/>
        <end position="691"/>
    </location>
</feature>
<feature type="region of interest" description="3' overhang DNA-binding" evidence="1">
    <location>
        <begin position="736"/>
        <end position="742"/>
    </location>
</feature>
<feature type="region of interest" description="Disordered" evidence="7">
    <location>
        <begin position="930"/>
        <end position="988"/>
    </location>
</feature>
<feature type="short sequence motif" description="DEAH box">
    <location>
        <begin position="375"/>
        <end position="378"/>
    </location>
</feature>
<feature type="short sequence motif" description="Nuclear localization signal" evidence="3">
    <location>
        <begin position="939"/>
        <end position="955"/>
    </location>
</feature>
<feature type="compositionally biased region" description="Acidic residues" evidence="7">
    <location>
        <begin position="158"/>
        <end position="174"/>
    </location>
</feature>
<feature type="binding site" evidence="1">
    <location>
        <begin position="248"/>
        <end position="252"/>
    </location>
    <ligand>
        <name>ATP</name>
        <dbReference type="ChEBI" id="CHEBI:30616"/>
    </ligand>
</feature>
<feature type="binding site" evidence="1">
    <location>
        <begin position="272"/>
        <end position="276"/>
    </location>
    <ligand>
        <name>ATP</name>
        <dbReference type="ChEBI" id="CHEBI:30616"/>
    </ligand>
</feature>
<feature type="binding site" evidence="1">
    <location>
        <position position="562"/>
    </location>
    <ligand>
        <name>ATP</name>
        <dbReference type="ChEBI" id="CHEBI:30616"/>
    </ligand>
</feature>
<feature type="binding site" evidence="1">
    <location>
        <position position="615"/>
    </location>
    <ligand>
        <name>Zn(2+)</name>
        <dbReference type="ChEBI" id="CHEBI:29105"/>
    </ligand>
</feature>
<feature type="binding site" evidence="1">
    <location>
        <position position="633"/>
    </location>
    <ligand>
        <name>Zn(2+)</name>
        <dbReference type="ChEBI" id="CHEBI:29105"/>
    </ligand>
</feature>
<feature type="binding site" evidence="1">
    <location>
        <position position="640"/>
    </location>
    <ligand>
        <name>Zn(2+)</name>
        <dbReference type="ChEBI" id="CHEBI:29105"/>
    </ligand>
</feature>
<feature type="binding site" evidence="1">
    <location>
        <position position="643"/>
    </location>
    <ligand>
        <name>Zn(2+)</name>
        <dbReference type="ChEBI" id="CHEBI:29105"/>
    </ligand>
</feature>
<feature type="site" description="3' overhang DNA-binding" evidence="1">
    <location>
        <position position="297"/>
    </location>
</feature>
<feature type="site" description="3' overhang DNA-binding" evidence="1">
    <location>
        <position position="388"/>
    </location>
</feature>
<feature type="site" description="3' overhang DNA-binding; via amide nitrogen" evidence="1">
    <location>
        <position position="501"/>
    </location>
</feature>
<feature type="site" description="3' overhang DNA-binding" evidence="1">
    <location>
        <position position="526"/>
    </location>
</feature>
<feature type="site" description="3' overhang DNA-binding" evidence="1">
    <location>
        <position position="548"/>
    </location>
</feature>
<feature type="site" description="3' overhang DNA-binding" evidence="1">
    <location>
        <position position="676"/>
    </location>
</feature>
<gene>
    <name evidence="15" type="primary">him-6</name>
    <name evidence="15" type="synonym">blm-1</name>
    <name evidence="15" type="ORF">T04A11.6</name>
</gene>
<keyword id="KW-0067">ATP-binding</keyword>
<keyword id="KW-0158">Chromosome</keyword>
<keyword id="KW-0227">DNA damage</keyword>
<keyword id="KW-0234">DNA repair</keyword>
<keyword id="KW-0235">DNA replication</keyword>
<keyword id="KW-0238">DNA-binding</keyword>
<keyword id="KW-0347">Helicase</keyword>
<keyword id="KW-0378">Hydrolase</keyword>
<keyword id="KW-0413">Isomerase</keyword>
<keyword id="KW-0479">Metal-binding</keyword>
<keyword id="KW-0547">Nucleotide-binding</keyword>
<keyword id="KW-0539">Nucleus</keyword>
<keyword id="KW-1185">Reference proteome</keyword>
<keyword id="KW-0677">Repeat</keyword>
<keyword id="KW-0862">Zinc</keyword>
<comment type="function">
    <text evidence="2 10 11 14">Component of the BTR double Holliday Junction dissolution complex, which is involved in homologous recombination during meiotic double strand break in the germline (Probable). Stabilizes and positively regulates the localization of the BTR double Holliday Junction dissolution complex component rmh-1 at nuclear foci during meiotic recombination (PubMed:27011106). Participates in DNA replication and repair (By similarity). Exhibits a magnesium-dependent ATP-dependent DNA-helicase activity that unwinds single- and double-stranded DNA in a 3'-5' direction (By similarity). Negatively regulates sister chromatid exchange (SCE) (PubMed:27010650).</text>
</comment>
<comment type="function">
    <text evidence="1 2 10">ATP-dependent DNA helicase that unwinds single- and double-stranded DNA in a 3'-5' direction. Participates in DNA replication and repair. Negatively regulates sister chromatid exchange (SCE) (PubMed:27010650). Stimulates DNA 4-way junction branch migration and DNA Holliday junction dissolution. Binds single-stranded DNA (ssDNA), forked duplex DNA and DNA Holliday junction.</text>
</comment>
<comment type="catalytic activity">
    <reaction evidence="1">
        <text>Couples ATP hydrolysis with the unwinding of duplex DNA by translocating in the 3'-5' direction.</text>
        <dbReference type="EC" id="5.6.2.4"/>
    </reaction>
</comment>
<comment type="catalytic activity">
    <reaction evidence="1">
        <text>ATP + H2O = ADP + phosphate + H(+)</text>
        <dbReference type="Rhea" id="RHEA:13065"/>
        <dbReference type="ChEBI" id="CHEBI:15377"/>
        <dbReference type="ChEBI" id="CHEBI:15378"/>
        <dbReference type="ChEBI" id="CHEBI:30616"/>
        <dbReference type="ChEBI" id="CHEBI:43474"/>
        <dbReference type="ChEBI" id="CHEBI:456216"/>
    </reaction>
</comment>
<comment type="cofactor">
    <cofactor evidence="1">
        <name>Zn(2+)</name>
        <dbReference type="ChEBI" id="CHEBI:29105"/>
    </cofactor>
    <text evidence="1">Binds 1 zinc ion per subunit.</text>
</comment>
<comment type="subunit">
    <text evidence="1 9 11 14">Monomer (By similarity). Homodimer (via N-terminus) (By similarity). Homotetramer (via N-terminus); dimer of dimers (By similarity). Homohexamer (via N-terminus) (By similarity). Self-association negatively regulates DNA unwinding amplitude and rate (By similarity). Oligomer forms dissociate into monomer in presence of ATP (By similarity). Component of the BTR double Holliday Junction dissolution complex composed of at least him-6, top-3, rmh-1 and rmif-2, which is involved in double strand break repair in the germline (Probable). May interact with rmh-1; the interaction is required for mutual stability and localization at nuclear foci (PubMed:27011106). Forms a complex composed of cdc-48.1, him-6 and crp-1; within the complex, interacts with cdc-48.1 (PubMed:18458060).</text>
</comment>
<comment type="subcellular location">
    <subcellularLocation>
        <location evidence="11 12">Nucleus</location>
    </subcellularLocation>
    <subcellularLocation>
        <location evidence="11">Chromosome</location>
    </subcellularLocation>
    <text evidence="11 12">Localizes on chromosomes during pachytene in meiotic prophase I in oocytes. Co-localizes with rmh-1 at mid-pachytene and late-pachytene in meiotic prophase I (PubMed:27011106). Localization at nuclear foci is dependent on rmh-1 during meiotic recombination (PubMed:27011106).</text>
</comment>
<comment type="domain">
    <text evidence="1">The N-terminal region mediates dimerization and homooligomerization. Both the helicase ATP-binding domain and the helicase C-terminal domain form intramolecular interactions with the HRDC domain in a ATP-dependent manner. The HRDC domain is required for single-stranded DNA (ssDNA) and DNA Holliday junction binding.</text>
</comment>
<comment type="disruption phenotype">
    <text evidence="10 11">Reduced viability, increased rad-51 foci in the germline and an increase of meiotic crossover formation in the central region of chromosomes (PubMed:27010650). Reduced number of rmh-1 foci in the pachytene region (PubMed:27011106). In an smc-5 mutant background, defects in diakinetic chiasmata formation, compromised chromosome segregation and aberrant distribution of the condensin II subunit hcp-6 in meiosis (PubMed:27010650).</text>
</comment>
<comment type="similarity">
    <text evidence="13">Belongs to the helicase family. RecQ subfamily.</text>
</comment>